<comment type="similarity">
    <text evidence="1">Belongs to the universal ribosomal protein uS2 family.</text>
</comment>
<feature type="chain" id="PRO_1000194350" description="Small ribosomal subunit protein uS2">
    <location>
        <begin position="1"/>
        <end position="259"/>
    </location>
</feature>
<reference key="1">
    <citation type="journal article" date="2010" name="Genome Biol.">
        <title>Structure and dynamics of the pan-genome of Streptococcus pneumoniae and closely related species.</title>
        <authorList>
            <person name="Donati C."/>
            <person name="Hiller N.L."/>
            <person name="Tettelin H."/>
            <person name="Muzzi A."/>
            <person name="Croucher N.J."/>
            <person name="Angiuoli S.V."/>
            <person name="Oggioni M."/>
            <person name="Dunning Hotopp J.C."/>
            <person name="Hu F.Z."/>
            <person name="Riley D.R."/>
            <person name="Covacci A."/>
            <person name="Mitchell T.J."/>
            <person name="Bentley S.D."/>
            <person name="Kilian M."/>
            <person name="Ehrlich G.D."/>
            <person name="Rappuoli R."/>
            <person name="Moxon E.R."/>
            <person name="Masignani V."/>
        </authorList>
    </citation>
    <scope>NUCLEOTIDE SEQUENCE [LARGE SCALE GENOMIC DNA]</scope>
    <source>
        <strain>P1031</strain>
    </source>
</reference>
<proteinExistence type="inferred from homology"/>
<accession>C1CNI8</accession>
<dbReference type="EMBL" id="CP000920">
    <property type="protein sequence ID" value="ACO20497.1"/>
    <property type="molecule type" value="Genomic_DNA"/>
</dbReference>
<dbReference type="RefSeq" id="WP_000268466.1">
    <property type="nucleotide sequence ID" value="NC_012467.1"/>
</dbReference>
<dbReference type="SMR" id="C1CNI8"/>
<dbReference type="GeneID" id="45652565"/>
<dbReference type="KEGG" id="spp:SPP_2267"/>
<dbReference type="HOGENOM" id="CLU_040318_1_2_9"/>
<dbReference type="GO" id="GO:0022627">
    <property type="term" value="C:cytosolic small ribosomal subunit"/>
    <property type="evidence" value="ECO:0007669"/>
    <property type="project" value="TreeGrafter"/>
</dbReference>
<dbReference type="GO" id="GO:0003735">
    <property type="term" value="F:structural constituent of ribosome"/>
    <property type="evidence" value="ECO:0007669"/>
    <property type="project" value="InterPro"/>
</dbReference>
<dbReference type="GO" id="GO:0006412">
    <property type="term" value="P:translation"/>
    <property type="evidence" value="ECO:0007669"/>
    <property type="project" value="UniProtKB-UniRule"/>
</dbReference>
<dbReference type="CDD" id="cd01425">
    <property type="entry name" value="RPS2"/>
    <property type="match status" value="1"/>
</dbReference>
<dbReference type="FunFam" id="1.10.287.610:FF:000001">
    <property type="entry name" value="30S ribosomal protein S2"/>
    <property type="match status" value="1"/>
</dbReference>
<dbReference type="Gene3D" id="3.40.50.10490">
    <property type="entry name" value="Glucose-6-phosphate isomerase like protein, domain 1"/>
    <property type="match status" value="1"/>
</dbReference>
<dbReference type="Gene3D" id="1.10.287.610">
    <property type="entry name" value="Helix hairpin bin"/>
    <property type="match status" value="1"/>
</dbReference>
<dbReference type="HAMAP" id="MF_00291_B">
    <property type="entry name" value="Ribosomal_uS2_B"/>
    <property type="match status" value="1"/>
</dbReference>
<dbReference type="InterPro" id="IPR001865">
    <property type="entry name" value="Ribosomal_uS2"/>
</dbReference>
<dbReference type="InterPro" id="IPR005706">
    <property type="entry name" value="Ribosomal_uS2_bac/mit/plastid"/>
</dbReference>
<dbReference type="InterPro" id="IPR018130">
    <property type="entry name" value="Ribosomal_uS2_CS"/>
</dbReference>
<dbReference type="InterPro" id="IPR023591">
    <property type="entry name" value="Ribosomal_uS2_flav_dom_sf"/>
</dbReference>
<dbReference type="NCBIfam" id="TIGR01011">
    <property type="entry name" value="rpsB_bact"/>
    <property type="match status" value="1"/>
</dbReference>
<dbReference type="PANTHER" id="PTHR12534">
    <property type="entry name" value="30S RIBOSOMAL PROTEIN S2 PROKARYOTIC AND ORGANELLAR"/>
    <property type="match status" value="1"/>
</dbReference>
<dbReference type="PANTHER" id="PTHR12534:SF0">
    <property type="entry name" value="SMALL RIBOSOMAL SUBUNIT PROTEIN US2M"/>
    <property type="match status" value="1"/>
</dbReference>
<dbReference type="Pfam" id="PF00318">
    <property type="entry name" value="Ribosomal_S2"/>
    <property type="match status" value="1"/>
</dbReference>
<dbReference type="PRINTS" id="PR00395">
    <property type="entry name" value="RIBOSOMALS2"/>
</dbReference>
<dbReference type="SUPFAM" id="SSF52313">
    <property type="entry name" value="Ribosomal protein S2"/>
    <property type="match status" value="1"/>
</dbReference>
<dbReference type="PROSITE" id="PS00962">
    <property type="entry name" value="RIBOSOMAL_S2_1"/>
    <property type="match status" value="1"/>
</dbReference>
<gene>
    <name evidence="1" type="primary">rpsB</name>
    <name type="ordered locus">SPP_2267</name>
</gene>
<organism>
    <name type="scientific">Streptococcus pneumoniae (strain P1031)</name>
    <dbReference type="NCBI Taxonomy" id="488223"/>
    <lineage>
        <taxon>Bacteria</taxon>
        <taxon>Bacillati</taxon>
        <taxon>Bacillota</taxon>
        <taxon>Bacilli</taxon>
        <taxon>Lactobacillales</taxon>
        <taxon>Streptococcaceae</taxon>
        <taxon>Streptococcus</taxon>
    </lineage>
</organism>
<sequence>MAVISMKQLLEAGVHFGHQTRRWNPKMAKYIFTERNGIHVIDLQQTVKYADQAYDFMRDAAANDAVVLFVGTKKQAADAVAEEAVRSGQYFINHRWLGGTLTNWGTIQKRIARLKEIKRMEEDGTFEVLPKKEVALLNKQRARLEKFLGGIEDMPRIPDVMYVVDPHKEQIAVKEAKKLGIPVVAMVDTNTDPDDIDVIIPANDDAIRAVKLITAKLADAIIEGRQGEDAVAVEAEFAASETQADSIEEIVEVVEGDNA</sequence>
<name>RS2_STRZP</name>
<evidence type="ECO:0000255" key="1">
    <source>
        <dbReference type="HAMAP-Rule" id="MF_00291"/>
    </source>
</evidence>
<evidence type="ECO:0000305" key="2"/>
<keyword id="KW-0687">Ribonucleoprotein</keyword>
<keyword id="KW-0689">Ribosomal protein</keyword>
<protein>
    <recommendedName>
        <fullName evidence="1">Small ribosomal subunit protein uS2</fullName>
    </recommendedName>
    <alternativeName>
        <fullName evidence="2">30S ribosomal protein S2</fullName>
    </alternativeName>
</protein>